<evidence type="ECO:0000255" key="1">
    <source>
        <dbReference type="HAMAP-Rule" id="MF_00335"/>
    </source>
</evidence>
<evidence type="ECO:0000255" key="2">
    <source>
        <dbReference type="PROSITE-ProRule" id="PRU01175"/>
    </source>
</evidence>
<organism>
    <name type="scientific">Desulfitobacterium hafniense (strain Y51)</name>
    <dbReference type="NCBI Taxonomy" id="138119"/>
    <lineage>
        <taxon>Bacteria</taxon>
        <taxon>Bacillati</taxon>
        <taxon>Bacillota</taxon>
        <taxon>Clostridia</taxon>
        <taxon>Eubacteriales</taxon>
        <taxon>Desulfitobacteriaceae</taxon>
        <taxon>Desulfitobacterium</taxon>
    </lineage>
</organism>
<feature type="chain" id="PRO_0000344863" description="Ribonuclease Y">
    <location>
        <begin position="1"/>
        <end position="524"/>
    </location>
</feature>
<feature type="transmembrane region" description="Helical" evidence="1">
    <location>
        <begin position="15"/>
        <end position="35"/>
    </location>
</feature>
<feature type="domain" description="KH" evidence="1">
    <location>
        <begin position="214"/>
        <end position="277"/>
    </location>
</feature>
<feature type="domain" description="HD" evidence="2">
    <location>
        <begin position="340"/>
        <end position="433"/>
    </location>
</feature>
<comment type="function">
    <text evidence="1">Endoribonuclease that initiates mRNA decay.</text>
</comment>
<comment type="subcellular location">
    <subcellularLocation>
        <location evidence="1">Cell membrane</location>
        <topology evidence="1">Single-pass membrane protein</topology>
    </subcellularLocation>
</comment>
<comment type="similarity">
    <text evidence="1">Belongs to the RNase Y family.</text>
</comment>
<name>RNY_DESHY</name>
<proteinExistence type="inferred from homology"/>
<sequence>MCLGGENYLELTELIFIVVAVVVSLFVGGFIGWLIRKSAAEKLIGSAEEEAKRVIDNAQGAAEAKRREAVIAAKEEVMHIRNEVEKESRERRNEIQRMERRVIQKEESLDRKMESLERKEDNLHRKEEEVDQLKEVLTQTVAKEKQELERVSGLSTEEAKQILLQSVEEEVRYESAIMIKDIETKAKEEAEKRAKNIISLAIQRCAADHVAESTVSVVALPSDEMKGRIIGREGRNIRTLETLTGIDLIIDDTPEAVILSGFDPIRREVARVALEKLIADGRIHPARIEEMVEKSQKEVDQRIREEGEQATFETGVHGLHPEIIRLLGRLKFRTSYGQNVLKHSMEVSHLAGLMAAELGVDVQLAKRAGLLHDLGKAVDHDTEGTHVQIGVDLAKKYKESWEVIHAIEAHHGDVEAKTIEAVLVAAADAVSAARPGARRETLESYIKRLQKLEEIADTYDGVEKSYAIQAGREIRIIVRPDKIDDVLAPKVAREISKRIEDELEYPGQIKVVVIRETRAVDYAK</sequence>
<dbReference type="EC" id="3.1.-.-" evidence="1"/>
<dbReference type="EMBL" id="AP008230">
    <property type="protein sequence ID" value="BAE83730.1"/>
    <property type="molecule type" value="Genomic_DNA"/>
</dbReference>
<dbReference type="RefSeq" id="WP_005812942.1">
    <property type="nucleotide sequence ID" value="NC_007907.1"/>
</dbReference>
<dbReference type="SMR" id="Q24W62"/>
<dbReference type="STRING" id="138119.DSY1941"/>
<dbReference type="KEGG" id="dsy:DSY1941"/>
<dbReference type="eggNOG" id="COG1418">
    <property type="taxonomic scope" value="Bacteria"/>
</dbReference>
<dbReference type="HOGENOM" id="CLU_028328_1_0_9"/>
<dbReference type="Proteomes" id="UP000001946">
    <property type="component" value="Chromosome"/>
</dbReference>
<dbReference type="GO" id="GO:0005886">
    <property type="term" value="C:plasma membrane"/>
    <property type="evidence" value="ECO:0007669"/>
    <property type="project" value="UniProtKB-SubCell"/>
</dbReference>
<dbReference type="GO" id="GO:0003723">
    <property type="term" value="F:RNA binding"/>
    <property type="evidence" value="ECO:0007669"/>
    <property type="project" value="UniProtKB-UniRule"/>
</dbReference>
<dbReference type="GO" id="GO:0004521">
    <property type="term" value="F:RNA endonuclease activity"/>
    <property type="evidence" value="ECO:0007669"/>
    <property type="project" value="UniProtKB-UniRule"/>
</dbReference>
<dbReference type="GO" id="GO:0006402">
    <property type="term" value="P:mRNA catabolic process"/>
    <property type="evidence" value="ECO:0007669"/>
    <property type="project" value="UniProtKB-UniRule"/>
</dbReference>
<dbReference type="CDD" id="cd00077">
    <property type="entry name" value="HDc"/>
    <property type="match status" value="1"/>
</dbReference>
<dbReference type="CDD" id="cd22431">
    <property type="entry name" value="KH-I_RNaseY"/>
    <property type="match status" value="1"/>
</dbReference>
<dbReference type="FunFam" id="1.10.3210.10:FF:000003">
    <property type="entry name" value="Ribonuclease Y"/>
    <property type="match status" value="1"/>
</dbReference>
<dbReference type="FunFam" id="3.30.1370.10:FF:000006">
    <property type="entry name" value="Ribonuclease Y"/>
    <property type="match status" value="1"/>
</dbReference>
<dbReference type="Gene3D" id="1.10.3210.10">
    <property type="entry name" value="Hypothetical protein af1432"/>
    <property type="match status" value="1"/>
</dbReference>
<dbReference type="Gene3D" id="3.30.1370.10">
    <property type="entry name" value="K Homology domain, type 1"/>
    <property type="match status" value="1"/>
</dbReference>
<dbReference type="HAMAP" id="MF_00335">
    <property type="entry name" value="RNase_Y"/>
    <property type="match status" value="1"/>
</dbReference>
<dbReference type="InterPro" id="IPR003607">
    <property type="entry name" value="HD/PDEase_dom"/>
</dbReference>
<dbReference type="InterPro" id="IPR006674">
    <property type="entry name" value="HD_domain"/>
</dbReference>
<dbReference type="InterPro" id="IPR006675">
    <property type="entry name" value="HDIG_dom"/>
</dbReference>
<dbReference type="InterPro" id="IPR004087">
    <property type="entry name" value="KH_dom"/>
</dbReference>
<dbReference type="InterPro" id="IPR004088">
    <property type="entry name" value="KH_dom_type_1"/>
</dbReference>
<dbReference type="InterPro" id="IPR036612">
    <property type="entry name" value="KH_dom_type_1_sf"/>
</dbReference>
<dbReference type="InterPro" id="IPR017705">
    <property type="entry name" value="Ribonuclease_Y"/>
</dbReference>
<dbReference type="InterPro" id="IPR022711">
    <property type="entry name" value="RNase_Y_N"/>
</dbReference>
<dbReference type="NCBIfam" id="TIGR00277">
    <property type="entry name" value="HDIG"/>
    <property type="match status" value="1"/>
</dbReference>
<dbReference type="NCBIfam" id="TIGR03319">
    <property type="entry name" value="RNase_Y"/>
    <property type="match status" value="1"/>
</dbReference>
<dbReference type="PANTHER" id="PTHR12826">
    <property type="entry name" value="RIBONUCLEASE Y"/>
    <property type="match status" value="1"/>
</dbReference>
<dbReference type="PANTHER" id="PTHR12826:SF15">
    <property type="entry name" value="RIBONUCLEASE Y"/>
    <property type="match status" value="1"/>
</dbReference>
<dbReference type="Pfam" id="PF01966">
    <property type="entry name" value="HD"/>
    <property type="match status" value="1"/>
</dbReference>
<dbReference type="Pfam" id="PF00013">
    <property type="entry name" value="KH_1"/>
    <property type="match status" value="1"/>
</dbReference>
<dbReference type="Pfam" id="PF12072">
    <property type="entry name" value="RNase_Y_N"/>
    <property type="match status" value="1"/>
</dbReference>
<dbReference type="SMART" id="SM00471">
    <property type="entry name" value="HDc"/>
    <property type="match status" value="1"/>
</dbReference>
<dbReference type="SMART" id="SM00322">
    <property type="entry name" value="KH"/>
    <property type="match status" value="1"/>
</dbReference>
<dbReference type="SUPFAM" id="SSF54791">
    <property type="entry name" value="Eukaryotic type KH-domain (KH-domain type I)"/>
    <property type="match status" value="1"/>
</dbReference>
<dbReference type="SUPFAM" id="SSF109604">
    <property type="entry name" value="HD-domain/PDEase-like"/>
    <property type="match status" value="1"/>
</dbReference>
<dbReference type="PROSITE" id="PS51831">
    <property type="entry name" value="HD"/>
    <property type="match status" value="1"/>
</dbReference>
<dbReference type="PROSITE" id="PS50084">
    <property type="entry name" value="KH_TYPE_1"/>
    <property type="match status" value="1"/>
</dbReference>
<keyword id="KW-1003">Cell membrane</keyword>
<keyword id="KW-0255">Endonuclease</keyword>
<keyword id="KW-0378">Hydrolase</keyword>
<keyword id="KW-0472">Membrane</keyword>
<keyword id="KW-0540">Nuclease</keyword>
<keyword id="KW-1185">Reference proteome</keyword>
<keyword id="KW-0694">RNA-binding</keyword>
<keyword id="KW-0812">Transmembrane</keyword>
<keyword id="KW-1133">Transmembrane helix</keyword>
<accession>Q24W62</accession>
<gene>
    <name evidence="1" type="primary">rny</name>
    <name type="ordered locus">DSY1941</name>
</gene>
<protein>
    <recommendedName>
        <fullName evidence="1">Ribonuclease Y</fullName>
        <shortName evidence="1">RNase Y</shortName>
        <ecNumber evidence="1">3.1.-.-</ecNumber>
    </recommendedName>
</protein>
<reference key="1">
    <citation type="journal article" date="2006" name="J. Bacteriol.">
        <title>Complete genome sequence of the dehalorespiring bacterium Desulfitobacterium hafniense Y51 and comparison with Dehalococcoides ethenogenes 195.</title>
        <authorList>
            <person name="Nonaka H."/>
            <person name="Keresztes G."/>
            <person name="Shinoda Y."/>
            <person name="Ikenaga Y."/>
            <person name="Abe M."/>
            <person name="Naito K."/>
            <person name="Inatomi K."/>
            <person name="Furukawa K."/>
            <person name="Inui M."/>
            <person name="Yukawa H."/>
        </authorList>
    </citation>
    <scope>NUCLEOTIDE SEQUENCE [LARGE SCALE GENOMIC DNA]</scope>
    <source>
        <strain>Y51</strain>
    </source>
</reference>